<organism>
    <name type="scientific">Neisseria meningitidis serogroup C / serotype 2a (strain ATCC 700532 / DSM 15464 / FAM18)</name>
    <dbReference type="NCBI Taxonomy" id="272831"/>
    <lineage>
        <taxon>Bacteria</taxon>
        <taxon>Pseudomonadati</taxon>
        <taxon>Pseudomonadota</taxon>
        <taxon>Betaproteobacteria</taxon>
        <taxon>Neisseriales</taxon>
        <taxon>Neisseriaceae</taxon>
        <taxon>Neisseria</taxon>
    </lineage>
</organism>
<protein>
    <recommendedName>
        <fullName evidence="1">tRNA pseudouridine synthase A</fullName>
        <ecNumber evidence="1">5.4.99.12</ecNumber>
    </recommendedName>
    <alternativeName>
        <fullName evidence="1">tRNA pseudouridine(38-40) synthase</fullName>
    </alternativeName>
    <alternativeName>
        <fullName evidence="1">tRNA pseudouridylate synthase I</fullName>
    </alternativeName>
    <alternativeName>
        <fullName evidence="1">tRNA-uridine isomerase I</fullName>
    </alternativeName>
</protein>
<sequence length="265" mass="29244">MDTAQKQRWAITLSYDGSRFYGWQKQADGVPTVQAALETALAQIAGEAVSTTVAGRTDTGVHATAQVVHFDTTAARPQQAWVRGVNAHLPEGIAVLHARQVAPEFHARFDAYGRHYRYLLESVPVRSPLLKNRAGWTHLKLDIGPMRRAAALLIGEQDFSSFRAAECQAKSPVKTIYRADLTQSSGLVRLDLHGNAFLHHMVRNIMGALVYVGSGRLSVEGFAALIQERSRLKAPPTFMPDGLYLTGVDYPEAYGIIRPQIPEWL</sequence>
<comment type="function">
    <text evidence="1">Formation of pseudouridine at positions 38, 39 and 40 in the anticodon stem and loop of transfer RNAs.</text>
</comment>
<comment type="catalytic activity">
    <reaction evidence="1">
        <text>uridine(38/39/40) in tRNA = pseudouridine(38/39/40) in tRNA</text>
        <dbReference type="Rhea" id="RHEA:22376"/>
        <dbReference type="Rhea" id="RHEA-COMP:10085"/>
        <dbReference type="Rhea" id="RHEA-COMP:10087"/>
        <dbReference type="ChEBI" id="CHEBI:65314"/>
        <dbReference type="ChEBI" id="CHEBI:65315"/>
        <dbReference type="EC" id="5.4.99.12"/>
    </reaction>
</comment>
<comment type="subunit">
    <text evidence="1">Homodimer.</text>
</comment>
<comment type="similarity">
    <text evidence="1">Belongs to the tRNA pseudouridine synthase TruA family.</text>
</comment>
<proteinExistence type="inferred from homology"/>
<evidence type="ECO:0000255" key="1">
    <source>
        <dbReference type="HAMAP-Rule" id="MF_00171"/>
    </source>
</evidence>
<keyword id="KW-0413">Isomerase</keyword>
<keyword id="KW-0819">tRNA processing</keyword>
<reference key="1">
    <citation type="journal article" date="2007" name="PLoS Genet.">
        <title>Meningococcal genetic variation mechanisms viewed through comparative analysis of serogroup C strain FAM18.</title>
        <authorList>
            <person name="Bentley S.D."/>
            <person name="Vernikos G.S."/>
            <person name="Snyder L.A.S."/>
            <person name="Churcher C."/>
            <person name="Arrowsmith C."/>
            <person name="Chillingworth T."/>
            <person name="Cronin A."/>
            <person name="Davis P.H."/>
            <person name="Holroyd N.E."/>
            <person name="Jagels K."/>
            <person name="Maddison M."/>
            <person name="Moule S."/>
            <person name="Rabbinowitsch E."/>
            <person name="Sharp S."/>
            <person name="Unwin L."/>
            <person name="Whitehead S."/>
            <person name="Quail M.A."/>
            <person name="Achtman M."/>
            <person name="Barrell B.G."/>
            <person name="Saunders N.J."/>
            <person name="Parkhill J."/>
        </authorList>
    </citation>
    <scope>NUCLEOTIDE SEQUENCE [LARGE SCALE GENOMIC DNA]</scope>
    <source>
        <strain>ATCC 700532 / DSM 15464 / FAM18</strain>
    </source>
</reference>
<name>TRUA_NEIMF</name>
<dbReference type="EC" id="5.4.99.12" evidence="1"/>
<dbReference type="EMBL" id="AM421808">
    <property type="protein sequence ID" value="CAM11173.1"/>
    <property type="molecule type" value="Genomic_DNA"/>
</dbReference>
<dbReference type="RefSeq" id="WP_002227725.1">
    <property type="nucleotide sequence ID" value="NC_008767.1"/>
</dbReference>
<dbReference type="SMR" id="A1KWB6"/>
<dbReference type="KEGG" id="nmc:NMC2017"/>
<dbReference type="HOGENOM" id="CLU_014673_0_2_4"/>
<dbReference type="Proteomes" id="UP000002286">
    <property type="component" value="Chromosome"/>
</dbReference>
<dbReference type="GO" id="GO:0003723">
    <property type="term" value="F:RNA binding"/>
    <property type="evidence" value="ECO:0007669"/>
    <property type="project" value="InterPro"/>
</dbReference>
<dbReference type="GO" id="GO:0160147">
    <property type="term" value="F:tRNA pseudouridine(38-40) synthase activity"/>
    <property type="evidence" value="ECO:0007669"/>
    <property type="project" value="UniProtKB-EC"/>
</dbReference>
<dbReference type="GO" id="GO:0031119">
    <property type="term" value="P:tRNA pseudouridine synthesis"/>
    <property type="evidence" value="ECO:0007669"/>
    <property type="project" value="UniProtKB-UniRule"/>
</dbReference>
<dbReference type="CDD" id="cd02570">
    <property type="entry name" value="PseudoU_synth_EcTruA"/>
    <property type="match status" value="1"/>
</dbReference>
<dbReference type="FunFam" id="3.30.70.580:FF:000001">
    <property type="entry name" value="tRNA pseudouridine synthase A"/>
    <property type="match status" value="1"/>
</dbReference>
<dbReference type="FunFam" id="3.30.70.660:FF:000016">
    <property type="entry name" value="tRNA pseudouridine synthase A"/>
    <property type="match status" value="1"/>
</dbReference>
<dbReference type="Gene3D" id="3.30.70.660">
    <property type="entry name" value="Pseudouridine synthase I, catalytic domain, C-terminal subdomain"/>
    <property type="match status" value="1"/>
</dbReference>
<dbReference type="Gene3D" id="3.30.70.580">
    <property type="entry name" value="Pseudouridine synthase I, catalytic domain, N-terminal subdomain"/>
    <property type="match status" value="1"/>
</dbReference>
<dbReference type="HAMAP" id="MF_00171">
    <property type="entry name" value="TruA"/>
    <property type="match status" value="1"/>
</dbReference>
<dbReference type="InterPro" id="IPR020103">
    <property type="entry name" value="PsdUridine_synth_cat_dom_sf"/>
</dbReference>
<dbReference type="InterPro" id="IPR001406">
    <property type="entry name" value="PsdUridine_synth_TruA"/>
</dbReference>
<dbReference type="InterPro" id="IPR020097">
    <property type="entry name" value="PsdUridine_synth_TruA_a/b_dom"/>
</dbReference>
<dbReference type="InterPro" id="IPR020095">
    <property type="entry name" value="PsdUridine_synth_TruA_C"/>
</dbReference>
<dbReference type="InterPro" id="IPR020094">
    <property type="entry name" value="TruA/RsuA/RluB/E/F_N"/>
</dbReference>
<dbReference type="NCBIfam" id="TIGR00071">
    <property type="entry name" value="hisT_truA"/>
    <property type="match status" value="1"/>
</dbReference>
<dbReference type="PANTHER" id="PTHR11142">
    <property type="entry name" value="PSEUDOURIDYLATE SYNTHASE"/>
    <property type="match status" value="1"/>
</dbReference>
<dbReference type="PANTHER" id="PTHR11142:SF0">
    <property type="entry name" value="TRNA PSEUDOURIDINE SYNTHASE-LIKE 1"/>
    <property type="match status" value="1"/>
</dbReference>
<dbReference type="Pfam" id="PF01416">
    <property type="entry name" value="PseudoU_synth_1"/>
    <property type="match status" value="2"/>
</dbReference>
<dbReference type="PIRSF" id="PIRSF001430">
    <property type="entry name" value="tRNA_psdUrid_synth"/>
    <property type="match status" value="1"/>
</dbReference>
<dbReference type="SUPFAM" id="SSF55120">
    <property type="entry name" value="Pseudouridine synthase"/>
    <property type="match status" value="1"/>
</dbReference>
<gene>
    <name evidence="1" type="primary">truA</name>
    <name type="ordered locus">NMC2017</name>
</gene>
<feature type="chain" id="PRO_1000017121" description="tRNA pseudouridine synthase A">
    <location>
        <begin position="1"/>
        <end position="265"/>
    </location>
</feature>
<feature type="active site" description="Nucleophile" evidence="1">
    <location>
        <position position="58"/>
    </location>
</feature>
<feature type="binding site" evidence="1">
    <location>
        <position position="116"/>
    </location>
    <ligand>
        <name>substrate</name>
    </ligand>
</feature>
<accession>A1KWB6</accession>